<keyword id="KW-0446">Lipid-binding</keyword>
<keyword id="KW-1185">Reference proteome</keyword>
<sequence>MPIKIVTDSSITIEPGIARELDITIVPLSVTIDGTMYSDDDLKFEDFMVKMAASKNLPKTSQPPVGVFAEVYEKIAAEDDEIISIHLTEALSGTVEAARQGGMLSGRNVTVIDSDFTDQAQKFQVVEAARLAKAGASKEEILEKIKYIRENTELFIGFSTLENLVKGGRVSRMTGLFGSLLQVRVIGTLKDRELNTLLRGRGSKTFYKWLEELSDSISSSGRKIREIGISHAQGLEFSQKAKEVLQKFVEKPISILDTNTTIATHTGPGAWAIMIDYE</sequence>
<dbReference type="EMBL" id="AE005176">
    <property type="protein sequence ID" value="AAK04596.1"/>
    <property type="status" value="ALT_INIT"/>
    <property type="molecule type" value="Genomic_DNA"/>
</dbReference>
<dbReference type="PIR" id="B86687">
    <property type="entry name" value="B86687"/>
</dbReference>
<dbReference type="RefSeq" id="NP_266654.1">
    <property type="nucleotide sequence ID" value="NC_002662.1"/>
</dbReference>
<dbReference type="RefSeq" id="WP_014570388.1">
    <property type="nucleotide sequence ID" value="NC_002662.1"/>
</dbReference>
<dbReference type="SMR" id="Q9CI68"/>
<dbReference type="PaxDb" id="272623-L98583"/>
<dbReference type="EnsemblBacteria" id="AAK04596">
    <property type="protein sequence ID" value="AAK04596"/>
    <property type="gene ID" value="L98583"/>
</dbReference>
<dbReference type="KEGG" id="lla:L98583"/>
<dbReference type="PATRIC" id="fig|272623.7.peg.541"/>
<dbReference type="eggNOG" id="COG1307">
    <property type="taxonomic scope" value="Bacteria"/>
</dbReference>
<dbReference type="HOGENOM" id="CLU_048251_3_2_9"/>
<dbReference type="OrthoDB" id="5429275at2"/>
<dbReference type="Proteomes" id="UP000002196">
    <property type="component" value="Chromosome"/>
</dbReference>
<dbReference type="GO" id="GO:0008289">
    <property type="term" value="F:lipid binding"/>
    <property type="evidence" value="ECO:0007669"/>
    <property type="project" value="UniProtKB-KW"/>
</dbReference>
<dbReference type="Gene3D" id="3.30.1180.10">
    <property type="match status" value="1"/>
</dbReference>
<dbReference type="Gene3D" id="3.40.50.10170">
    <property type="match status" value="1"/>
</dbReference>
<dbReference type="InterPro" id="IPR003797">
    <property type="entry name" value="DegV"/>
</dbReference>
<dbReference type="InterPro" id="IPR043168">
    <property type="entry name" value="DegV_C"/>
</dbReference>
<dbReference type="InterPro" id="IPR050270">
    <property type="entry name" value="DegV_domain_contain"/>
</dbReference>
<dbReference type="NCBIfam" id="TIGR00762">
    <property type="entry name" value="DegV"/>
    <property type="match status" value="1"/>
</dbReference>
<dbReference type="PANTHER" id="PTHR33434">
    <property type="entry name" value="DEGV DOMAIN-CONTAINING PROTEIN DR_1986-RELATED"/>
    <property type="match status" value="1"/>
</dbReference>
<dbReference type="PANTHER" id="PTHR33434:SF8">
    <property type="entry name" value="DEGV DOMAIN-CONTAINING PROTEIN SPR1019"/>
    <property type="match status" value="1"/>
</dbReference>
<dbReference type="Pfam" id="PF02645">
    <property type="entry name" value="DegV"/>
    <property type="match status" value="1"/>
</dbReference>
<dbReference type="SUPFAM" id="SSF82549">
    <property type="entry name" value="DAK1/DegV-like"/>
    <property type="match status" value="1"/>
</dbReference>
<dbReference type="PROSITE" id="PS51482">
    <property type="entry name" value="DEGV"/>
    <property type="match status" value="1"/>
</dbReference>
<protein>
    <recommendedName>
        <fullName>DegV domain-containing protein YejH</fullName>
    </recommendedName>
</protein>
<name>YEJH_LACLA</name>
<comment type="function">
    <text evidence="1">May bind long-chain fatty acids, such as palmitate, and may play a role in lipid transport or fatty acid metabolism.</text>
</comment>
<comment type="sequence caution" evidence="4">
    <conflict type="erroneous initiation">
        <sequence resource="EMBL-CDS" id="AAK04596"/>
    </conflict>
</comment>
<proteinExistence type="inferred from homology"/>
<evidence type="ECO:0000250" key="1"/>
<evidence type="ECO:0000250" key="2">
    <source>
        <dbReference type="UniProtKB" id="Q9X1H9"/>
    </source>
</evidence>
<evidence type="ECO:0000255" key="3">
    <source>
        <dbReference type="PROSITE-ProRule" id="PRU00815"/>
    </source>
</evidence>
<evidence type="ECO:0000305" key="4"/>
<reference key="1">
    <citation type="journal article" date="2001" name="Genome Res.">
        <title>The complete genome sequence of the lactic acid bacterium Lactococcus lactis ssp. lactis IL1403.</title>
        <authorList>
            <person name="Bolotin A."/>
            <person name="Wincker P."/>
            <person name="Mauger S."/>
            <person name="Jaillon O."/>
            <person name="Malarme K."/>
            <person name="Weissenbach J."/>
            <person name="Ehrlich S.D."/>
            <person name="Sorokin A."/>
        </authorList>
    </citation>
    <scope>NUCLEOTIDE SEQUENCE [LARGE SCALE GENOMIC DNA]</scope>
    <source>
        <strain>IL1403</strain>
    </source>
</reference>
<feature type="chain" id="PRO_0000209765" description="DegV domain-containing protein YejH">
    <location>
        <begin position="1"/>
        <end position="278"/>
    </location>
</feature>
<feature type="domain" description="DegV" evidence="3">
    <location>
        <begin position="3"/>
        <end position="277"/>
    </location>
</feature>
<feature type="binding site" evidence="2">
    <location>
        <position position="60"/>
    </location>
    <ligand>
        <name>hexadecanoate</name>
        <dbReference type="ChEBI" id="CHEBI:7896"/>
    </ligand>
</feature>
<feature type="binding site" evidence="2">
    <location>
        <position position="92"/>
    </location>
    <ligand>
        <name>hexadecanoate</name>
        <dbReference type="ChEBI" id="CHEBI:7896"/>
    </ligand>
</feature>
<organism>
    <name type="scientific">Lactococcus lactis subsp. lactis (strain IL1403)</name>
    <name type="common">Streptococcus lactis</name>
    <dbReference type="NCBI Taxonomy" id="272623"/>
    <lineage>
        <taxon>Bacteria</taxon>
        <taxon>Bacillati</taxon>
        <taxon>Bacillota</taxon>
        <taxon>Bacilli</taxon>
        <taxon>Lactobacillales</taxon>
        <taxon>Streptococcaceae</taxon>
        <taxon>Lactococcus</taxon>
    </lineage>
</organism>
<accession>Q9CI68</accession>
<gene>
    <name type="primary">yejH</name>
    <name type="ordered locus">LL0498</name>
    <name type="ORF">L98583</name>
</gene>